<organism>
    <name type="scientific">Xanthomonas oryzae pv. oryzae (strain KACC10331 / KXO85)</name>
    <dbReference type="NCBI Taxonomy" id="291331"/>
    <lineage>
        <taxon>Bacteria</taxon>
        <taxon>Pseudomonadati</taxon>
        <taxon>Pseudomonadota</taxon>
        <taxon>Gammaproteobacteria</taxon>
        <taxon>Lysobacterales</taxon>
        <taxon>Lysobacteraceae</taxon>
        <taxon>Xanthomonas</taxon>
    </lineage>
</organism>
<accession>Q05I79</accession>
<sequence>MDISTDNPDHGFQFPGTFELSAMGAAERGLETELPRLLAATGVELLQESVSWKHSSSGKYVSVKIGFRAESREQFDAAHQALRDHPEVKWTL</sequence>
<dbReference type="EMBL" id="AE013598">
    <property type="protein sequence ID" value="ABJ90023.1"/>
    <property type="molecule type" value="Genomic_DNA"/>
</dbReference>
<dbReference type="SMR" id="Q05I79"/>
<dbReference type="STRING" id="291331.XOO4915"/>
<dbReference type="KEGG" id="xoo:XOO4915"/>
<dbReference type="HOGENOM" id="CLU_161438_1_1_6"/>
<dbReference type="Proteomes" id="UP000006735">
    <property type="component" value="Chromosome"/>
</dbReference>
<dbReference type="Gene3D" id="3.30.70.260">
    <property type="match status" value="1"/>
</dbReference>
<dbReference type="HAMAP" id="MF_00659">
    <property type="entry name" value="UPF0250"/>
    <property type="match status" value="1"/>
</dbReference>
<dbReference type="InterPro" id="IPR007454">
    <property type="entry name" value="UPF0250_YbeD-like"/>
</dbReference>
<dbReference type="InterPro" id="IPR027471">
    <property type="entry name" value="YbeD-like_sf"/>
</dbReference>
<dbReference type="NCBIfam" id="NF002066">
    <property type="entry name" value="PRK00907.1"/>
    <property type="match status" value="1"/>
</dbReference>
<dbReference type="Pfam" id="PF04359">
    <property type="entry name" value="DUF493"/>
    <property type="match status" value="1"/>
</dbReference>
<dbReference type="SUPFAM" id="SSF117991">
    <property type="entry name" value="YbeD/HP0495-like"/>
    <property type="match status" value="1"/>
</dbReference>
<protein>
    <recommendedName>
        <fullName evidence="1">UPF0250 protein XOO4915</fullName>
    </recommendedName>
</protein>
<feature type="chain" id="PRO_1000061908" description="UPF0250 protein XOO4915">
    <location>
        <begin position="1"/>
        <end position="92"/>
    </location>
</feature>
<proteinExistence type="inferred from homology"/>
<evidence type="ECO:0000255" key="1">
    <source>
        <dbReference type="HAMAP-Rule" id="MF_00659"/>
    </source>
</evidence>
<name>Y4915_XANOR</name>
<gene>
    <name type="ordered locus">XOO4915</name>
</gene>
<keyword id="KW-1185">Reference proteome</keyword>
<comment type="similarity">
    <text evidence="1">Belongs to the UPF0250 family.</text>
</comment>
<reference key="1">
    <citation type="journal article" date="2005" name="Nucleic Acids Res.">
        <title>The genome sequence of Xanthomonas oryzae pathovar oryzae KACC10331, the bacterial blight pathogen of rice.</title>
        <authorList>
            <person name="Lee B.-M."/>
            <person name="Park Y.-J."/>
            <person name="Park D.-S."/>
            <person name="Kang H.-W."/>
            <person name="Kim J.-G."/>
            <person name="Song E.-S."/>
            <person name="Park I.-C."/>
            <person name="Yoon U.-H."/>
            <person name="Hahn J.-H."/>
            <person name="Koo B.-S."/>
            <person name="Lee G.-B."/>
            <person name="Kim H."/>
            <person name="Park H.-S."/>
            <person name="Yoon K.-O."/>
            <person name="Kim J.-H."/>
            <person name="Jung C.-H."/>
            <person name="Koh N.-H."/>
            <person name="Seo J.-S."/>
            <person name="Go S.-J."/>
        </authorList>
    </citation>
    <scope>NUCLEOTIDE SEQUENCE [LARGE SCALE GENOMIC DNA]</scope>
    <source>
        <strain>KACC10331 / KXO85</strain>
    </source>
</reference>